<comment type="function">
    <text evidence="3 5 6 7 8 9 10 11 12 15 16">Nonribosomal peptide synthetase; part of the gene cluster that mediates the biosynthesis of fumitremorgins, indole alkaloids that carry not only intriguing chemical structures, but also interesting biological and pharmacological activities (PubMed:16755625, PubMed:23649274). The biosynthesis of fumitremorgin-type alkaloids begins by condensation of the two amino acids L-tryptophan and L-proline to brevianamide F, catalyzed by the non-ribosomal peptide synthetase ftmA (PubMed:16755625, PubMed:17464044). Brevianamide F is then prenylated by the prenyltransferase ftmPT1/ftmB in the presence of dimethylallyl diphosphate, resulting in the formation of tryprostatin B (PubMed:16000710, PubMed:21105662, PubMed:23090579). The three cytochrome P450 monooxygenases, ftmP450-1/ftmC, ftmP450-2/ftmE and ftmP450-3/FtmG, are responsible for the conversion of tryprostatin B to 6-hydroxytryprostatin B, tryprostatin A to fumitremorgin C and fumitremorgin C to 12,13-dihydroxyfumitremorgin C, respectively (PubMed:19226505). The putative methyltransferase ftmMT/ftmD is expected for the conversion of 6-hydroxytryprostatin B to tryprostatin A (Probable). FtmPT2/FtmH catalyzes the prenylation of 12,13-dihydroxyfumitre-morgin C in the presence of dimethylallyl diphosphate, resulting in the formation of fumitremorgin B (PubMed:18683158). Fumitremorgin B is further converted to verruculogen by ftmOx1/ftmF via the insertion of an endoperoxide bond between the two prenyl moieties (PubMed:19763315). In some fungal species, verruculogen is further converted to fumitremorgin A, but the enzymes involved in this step have not been identified yet (Probable).</text>
</comment>
<comment type="catalytic activity">
    <reaction evidence="5">
        <text>L-proline + L-tryptophan + 2 ATP = brevianamide F + 2 AMP + 2 diphosphate + 2 H(+)</text>
        <dbReference type="Rhea" id="RHEA:35935"/>
        <dbReference type="ChEBI" id="CHEBI:15378"/>
        <dbReference type="ChEBI" id="CHEBI:30616"/>
        <dbReference type="ChEBI" id="CHEBI:33019"/>
        <dbReference type="ChEBI" id="CHEBI:57912"/>
        <dbReference type="ChEBI" id="CHEBI:60039"/>
        <dbReference type="ChEBI" id="CHEBI:64530"/>
        <dbReference type="ChEBI" id="CHEBI:456215"/>
    </reaction>
</comment>
<comment type="pathway">
    <text evidence="5 12">Mycotoxin biosynthesis.</text>
</comment>
<comment type="induction">
    <text evidence="4">Expression is under the control of StuA, which is responsible for transcriptional activation during acquisition of developmental competence.</text>
</comment>
<comment type="domain">
    <text evidence="17">NRP synthetases are composed of discrete domains (adenylation (A), thiolation (T) or peptidyl carrier protein (PCP) and condensation (C) domains) which when grouped together are referred to as a single module. Each module is responsible for the recognition (via the A domain) and incorporation of a single amino acid into the growing peptide product. Thus, an NRP synthetase is generally composed of one or more modules and can terminate in a thioesterase domain (TE) that releases the newly synthesized peptide from the enzyme. Occasionally, epimerase (E) domains (responsible for l- to d- amino acid conversion) are present within the NRP synthetase. NRPS13 has the following architecture: A-T-C-A-T-C.</text>
</comment>
<comment type="similarity">
    <text evidence="15">Belongs to the NRP synthetase family.</text>
</comment>
<comment type="caution">
    <text evidence="18">In contrast to other A.fumigatus strains, strain ATCC MYA-4609 does not produce indole alkaloids such as fumitremorgins and verruculogen. While the biosynthetic pathway is complete, a variation in the O-methyltransferase FtmD (AC Q4WAW6) abolishes production of the tryprostatin A intermediate (PubMed:23649274).</text>
</comment>
<evidence type="ECO:0000255" key="1"/>
<evidence type="ECO:0000255" key="2">
    <source>
        <dbReference type="PROSITE-ProRule" id="PRU00258"/>
    </source>
</evidence>
<evidence type="ECO:0000269" key="3">
    <source>
    </source>
</evidence>
<evidence type="ECO:0000269" key="4">
    <source>
    </source>
</evidence>
<evidence type="ECO:0000269" key="5">
    <source>
    </source>
</evidence>
<evidence type="ECO:0000269" key="6">
    <source>
    </source>
</evidence>
<evidence type="ECO:0000269" key="7">
    <source>
    </source>
</evidence>
<evidence type="ECO:0000269" key="8">
    <source>
    </source>
</evidence>
<evidence type="ECO:0000269" key="9">
    <source>
    </source>
</evidence>
<evidence type="ECO:0000269" key="10">
    <source>
    </source>
</evidence>
<evidence type="ECO:0000269" key="11">
    <source>
    </source>
</evidence>
<evidence type="ECO:0000269" key="12">
    <source>
    </source>
</evidence>
<evidence type="ECO:0000303" key="13">
    <source>
    </source>
</evidence>
<evidence type="ECO:0000303" key="14">
    <source>
    </source>
</evidence>
<evidence type="ECO:0000305" key="15"/>
<evidence type="ECO:0000305" key="16">
    <source>
    </source>
</evidence>
<evidence type="ECO:0000305" key="17">
    <source>
    </source>
</evidence>
<evidence type="ECO:0000305" key="18">
    <source>
    </source>
</evidence>
<sequence length="2211" mass="242838">MAMALAVGAPSEQRGNLPYNTLKDGPTVDSMKATTDGKNGQGESAFWDTCVHTVFREHCQRAPNSPAVNAWDGSFTYAELDSLSDAIASVLILSGVGPESIIPIYMQKSRWTTVAILGVLKSGGAFTLLDPSHPRSRVEEISKEIQARFILTSEKLSKQCLEMFSVLVVEHLSRACLPSPGQAGHTRSRPENAAYIAFTSGSTGKPKGIVIEHRSYCSGARSHLKVFGIDSTSRVLQFASYAFDVSIMETLSTLMAGGCLCVMSESERSDPNLFVVSYKNLRISHCFMTPSFARTVPWTECCNPPPTLIVGGELMRPSDARAYKEMGIRCMNAYGPAECSVNVSVQSRVEAAVDPRNIGYTTGATAWIISPENPEELMPTGTVGELLVEGPIVGRGYLNDPKATRQAFIDTPAWLRRHRKGTSYQHRVYRTGDLASLDSITGALLLHGRKDAQVKIRGQRVELPDIEHHLQLTLPNDNAEVIVEKVTFSDDGSEKLIAFVLVRPSNTDSVIGNTGDRLFLAPQSQIMEQFAISKKHLQTHLPSYMVPDIFIPISTLPQTASGKTDRKALRTRAAALSRRDVQCFLLSPAGGKRPPSTPKEATIRSLYSNVLNLPIDLIGMDDTFLRLGGDSLQAIRLVAAARAAGLILQAKDILSSQSTLAEQSKRAGLIQTIDRTWESSPPFALLHGPTRHAIVDLAQKQCRVPSNLIEDIYPCTALQEGMFITSLKHPGMYTGQIIFDIPDRMELPRLRAAWLSVVSENAALRTRIIETHEGLMQAVIVDDFVWEEETDEMLLSSDGEALEITKIGVPLVRFRYRPRHRQLMMTIHHSIWDGWSLRLVHEQLHRAYIGRDLLPSTSYRSFIQYTQELQGADEFWASELAGVNAPIFPTLPSGNYRPRVNASHRHVVRNLASTGKEEHTAATYIHLAWSLLVAHYTDADETVYGVTVNGRSADVPGVENIVGPTIATVPTRIRVNEEDTVEMALDHVQDALARMIPYEQAGLQRISRCSRDASEACRFQTLLIIEAPTDSDVDCEKNEAGNFSIIGGTTQTGMDYTAFSSYAMMLVFRTSANKSAISFDITYDAQVIGHDEVERMAHQFEHVLRHIYTLATGRIGDISFIGPRDIEQVQQWNSSMPPADNRFLQELIFAQCSRRPQASAIISWDGSWTYRELWAHSSFFARQLQRYGVTRGTPVAVCLDRSRWSIAVILGVLLARGTCVLIDLLAPRQRVRDILQIAGTGILVHSHATATLTSGLCPTVVNVSFLAAQSDSSQPEFPFTLETWGGTPEDLAFIIFTSGSTGHPKGIEMPHRTLSTSISHHSAGMRVTSSSRVLHFSSYAFDVSIYEIFTTLAAGGTICVPSEFDRMNNLAGFIQDTQVNWAFLTPSTARSLNPADVPLLTTLVLGGEAVTHESVEVWAKGRSLINGYGPAEATICGVGNIPEAGWKSGVVGRIIGGLGWVTVPSDPNRLAAVGAVGELLLEGPFLARGYLNLPEVTKAAFIDPPSWRTRIPAPSPYSFLYRTGDLVRYQPDGSIQYVGRKDSRVKLRGQLVDLGAVEASVMRVYPAAGQVVADVLVSENTARLIAMVKLGPSVTENHDGPMFAAPDLVFNEAAASIQARLRAIVPAYMVPSMFIPLRHIPRTLTGKTDRRRLRDKILSLSHSDLQRYMMSSSTKTPMSDDNERRLQEIWAEVLQLPCEAIGREDSFLSLGGESLATMKMVALARRVGFMFAVTDVMNNTSLSTLARSRHLITEQAILTSSPSLSLPTIEGESLQEILRPLLNAGHIQGGNDIAAIHPVTAAQAFLVQRYPWSHFQFDLSGAVSPSKLQTACTALMARFTILRTVFVEHAGCLLQLVLREVPNRVHEITTNEPLDDFCNSVCQQQQDVCVVNSTTLPTLFTLVSNRQLNRHRLLLRLAHAQYDLTTIPLIVQSLADEYNRTLRSGFSADFGYYLSHHKRQNNDDRSHNFWKRYLSGSSMMSTNQTADPTTVQERVFHVTGSCIIIPTSHPPDITIATAVKAAVCLVLAARTGCTDIVIGQTVDARCSSADSTLDQIVGPCTNYIPYRLSVCCSKTALEYLRSAQAQHTTCLRYSSLDFDQIVAKCTSWPSSTQFGYIVQHQDTGAELALTLGGDTTSLPMTSYGRVFPQGEVWIGSTPCSTGLRIDVIALSAVLSQKDAQTMAEEVGAALEKLLGCGYRRLSHLIGNTFAT</sequence>
<organism>
    <name type="scientific">Aspergillus fumigatus (strain ATCC MYA-4609 / CBS 101355 / FGSC A1100 / Af293)</name>
    <name type="common">Neosartorya fumigata</name>
    <dbReference type="NCBI Taxonomy" id="330879"/>
    <lineage>
        <taxon>Eukaryota</taxon>
        <taxon>Fungi</taxon>
        <taxon>Dikarya</taxon>
        <taxon>Ascomycota</taxon>
        <taxon>Pezizomycotina</taxon>
        <taxon>Eurotiomycetes</taxon>
        <taxon>Eurotiomycetidae</taxon>
        <taxon>Eurotiales</taxon>
        <taxon>Aspergillaceae</taxon>
        <taxon>Aspergillus</taxon>
        <taxon>Aspergillus subgen. Fumigati</taxon>
    </lineage>
</organism>
<dbReference type="EC" id="6.3.3.-" evidence="5"/>
<dbReference type="EMBL" id="AAHF01000014">
    <property type="protein sequence ID" value="EAL85149.1"/>
    <property type="molecule type" value="Genomic_DNA"/>
</dbReference>
<dbReference type="RefSeq" id="XP_747187.1">
    <property type="nucleotide sequence ID" value="XM_742094.1"/>
</dbReference>
<dbReference type="SMR" id="Q4WAW3"/>
<dbReference type="STRING" id="330879.Q4WAW3"/>
<dbReference type="EnsemblFungi" id="EAL85149">
    <property type="protein sequence ID" value="EAL85149"/>
    <property type="gene ID" value="AFUA_8G00170"/>
</dbReference>
<dbReference type="GeneID" id="3504405"/>
<dbReference type="KEGG" id="afm:AFUA_8G00170"/>
<dbReference type="VEuPathDB" id="FungiDB:Afu8g00170"/>
<dbReference type="eggNOG" id="KOG1178">
    <property type="taxonomic scope" value="Eukaryota"/>
</dbReference>
<dbReference type="eggNOG" id="KOG1256">
    <property type="taxonomic scope" value="Eukaryota"/>
</dbReference>
<dbReference type="HOGENOM" id="CLU_000022_60_2_1"/>
<dbReference type="InParanoid" id="Q4WAW3"/>
<dbReference type="OMA" id="KFHHIIM"/>
<dbReference type="OrthoDB" id="416786at2759"/>
<dbReference type="Proteomes" id="UP000002530">
    <property type="component" value="Chromosome 8"/>
</dbReference>
<dbReference type="GO" id="GO:0005737">
    <property type="term" value="C:cytoplasm"/>
    <property type="evidence" value="ECO:0000318"/>
    <property type="project" value="GO_Central"/>
</dbReference>
<dbReference type="GO" id="GO:0016853">
    <property type="term" value="F:isomerase activity"/>
    <property type="evidence" value="ECO:0007669"/>
    <property type="project" value="UniProtKB-KW"/>
</dbReference>
<dbReference type="GO" id="GO:0016874">
    <property type="term" value="F:ligase activity"/>
    <property type="evidence" value="ECO:0007669"/>
    <property type="project" value="UniProtKB-KW"/>
</dbReference>
<dbReference type="GO" id="GO:0031177">
    <property type="term" value="F:phosphopantetheine binding"/>
    <property type="evidence" value="ECO:0000318"/>
    <property type="project" value="GO_Central"/>
</dbReference>
<dbReference type="GO" id="GO:0043041">
    <property type="term" value="P:amino acid activation for nonribosomal peptide biosynthetic process"/>
    <property type="evidence" value="ECO:0000318"/>
    <property type="project" value="GO_Central"/>
</dbReference>
<dbReference type="GO" id="GO:1900805">
    <property type="term" value="P:brevianamide F biosynthetic process"/>
    <property type="evidence" value="ECO:0000315"/>
    <property type="project" value="AspGD"/>
</dbReference>
<dbReference type="GO" id="GO:1900772">
    <property type="term" value="P:fumitremorgin B biosynthetic process"/>
    <property type="evidence" value="ECO:0000314"/>
    <property type="project" value="AspGD"/>
</dbReference>
<dbReference type="GO" id="GO:0019184">
    <property type="term" value="P:nonribosomal peptide biosynthetic process"/>
    <property type="evidence" value="ECO:0000255"/>
    <property type="project" value="AspGD"/>
</dbReference>
<dbReference type="GO" id="GO:0044550">
    <property type="term" value="P:secondary metabolite biosynthetic process"/>
    <property type="evidence" value="ECO:0000318"/>
    <property type="project" value="GO_Central"/>
</dbReference>
<dbReference type="GO" id="GO:1902181">
    <property type="term" value="P:verruculogen biosynthetic process"/>
    <property type="evidence" value="ECO:0000314"/>
    <property type="project" value="GO_Central"/>
</dbReference>
<dbReference type="CDD" id="cd05918">
    <property type="entry name" value="A_NRPS_SidN3_like"/>
    <property type="match status" value="2"/>
</dbReference>
<dbReference type="CDD" id="cd19542">
    <property type="entry name" value="CT_NRPS-like"/>
    <property type="match status" value="1"/>
</dbReference>
<dbReference type="CDD" id="cd19545">
    <property type="entry name" value="FUM14_C_NRPS-like"/>
    <property type="match status" value="1"/>
</dbReference>
<dbReference type="FunFam" id="3.40.50.980:FF:000001">
    <property type="entry name" value="Non-ribosomal peptide synthetase"/>
    <property type="match status" value="1"/>
</dbReference>
<dbReference type="FunFam" id="3.30.300.30:FF:000015">
    <property type="entry name" value="Nonribosomal peptide synthase SidD"/>
    <property type="match status" value="2"/>
</dbReference>
<dbReference type="FunFam" id="3.40.50.12780:FF:000014">
    <property type="entry name" value="Nonribosomal peptide synthetase 1"/>
    <property type="match status" value="2"/>
</dbReference>
<dbReference type="FunFam" id="1.10.1200.10:FF:000028">
    <property type="entry name" value="Nonribosomal peptide synthetase 13"/>
    <property type="match status" value="1"/>
</dbReference>
<dbReference type="Gene3D" id="3.30.300.30">
    <property type="match status" value="2"/>
</dbReference>
<dbReference type="Gene3D" id="1.10.1200.10">
    <property type="entry name" value="ACP-like"/>
    <property type="match status" value="2"/>
</dbReference>
<dbReference type="Gene3D" id="3.30.559.10">
    <property type="entry name" value="Chloramphenicol acetyltransferase-like domain"/>
    <property type="match status" value="2"/>
</dbReference>
<dbReference type="Gene3D" id="3.40.50.12780">
    <property type="entry name" value="N-terminal domain of ligase-like"/>
    <property type="match status" value="2"/>
</dbReference>
<dbReference type="Gene3D" id="3.30.559.30">
    <property type="entry name" value="Nonribosomal peptide synthetase, condensation domain"/>
    <property type="match status" value="2"/>
</dbReference>
<dbReference type="InterPro" id="IPR010071">
    <property type="entry name" value="AA_adenyl_dom"/>
</dbReference>
<dbReference type="InterPro" id="IPR036736">
    <property type="entry name" value="ACP-like_sf"/>
</dbReference>
<dbReference type="InterPro" id="IPR045851">
    <property type="entry name" value="AMP-bd_C_sf"/>
</dbReference>
<dbReference type="InterPro" id="IPR020845">
    <property type="entry name" value="AMP-binding_CS"/>
</dbReference>
<dbReference type="InterPro" id="IPR000873">
    <property type="entry name" value="AMP-dep_synth/lig_dom"/>
</dbReference>
<dbReference type="InterPro" id="IPR042099">
    <property type="entry name" value="ANL_N_sf"/>
</dbReference>
<dbReference type="InterPro" id="IPR023213">
    <property type="entry name" value="CAT-like_dom_sf"/>
</dbReference>
<dbReference type="InterPro" id="IPR001242">
    <property type="entry name" value="Condensatn"/>
</dbReference>
<dbReference type="InterPro" id="IPR009081">
    <property type="entry name" value="PP-bd_ACP"/>
</dbReference>
<dbReference type="InterPro" id="IPR006162">
    <property type="entry name" value="Ppantetheine_attach_site"/>
</dbReference>
<dbReference type="NCBIfam" id="TIGR01733">
    <property type="entry name" value="AA-adenyl-dom"/>
    <property type="match status" value="1"/>
</dbReference>
<dbReference type="PANTHER" id="PTHR45527:SF1">
    <property type="entry name" value="FATTY ACID SYNTHASE"/>
    <property type="match status" value="1"/>
</dbReference>
<dbReference type="PANTHER" id="PTHR45527">
    <property type="entry name" value="NONRIBOSOMAL PEPTIDE SYNTHETASE"/>
    <property type="match status" value="1"/>
</dbReference>
<dbReference type="Pfam" id="PF00501">
    <property type="entry name" value="AMP-binding"/>
    <property type="match status" value="2"/>
</dbReference>
<dbReference type="Pfam" id="PF00668">
    <property type="entry name" value="Condensation"/>
    <property type="match status" value="2"/>
</dbReference>
<dbReference type="Pfam" id="PF00550">
    <property type="entry name" value="PP-binding"/>
    <property type="match status" value="2"/>
</dbReference>
<dbReference type="SUPFAM" id="SSF56801">
    <property type="entry name" value="Acetyl-CoA synthetase-like"/>
    <property type="match status" value="2"/>
</dbReference>
<dbReference type="SUPFAM" id="SSF47336">
    <property type="entry name" value="ACP-like"/>
    <property type="match status" value="2"/>
</dbReference>
<dbReference type="SUPFAM" id="SSF52777">
    <property type="entry name" value="CoA-dependent acyltransferases"/>
    <property type="match status" value="4"/>
</dbReference>
<dbReference type="PROSITE" id="PS00455">
    <property type="entry name" value="AMP_BINDING"/>
    <property type="match status" value="2"/>
</dbReference>
<dbReference type="PROSITE" id="PS50075">
    <property type="entry name" value="CARRIER"/>
    <property type="match status" value="2"/>
</dbReference>
<dbReference type="PROSITE" id="PS00012">
    <property type="entry name" value="PHOSPHOPANTETHEINE"/>
    <property type="match status" value="2"/>
</dbReference>
<feature type="chain" id="PRO_0000416554" description="Nonribosomal peptide synthetase 13">
    <location>
        <begin position="1"/>
        <end position="2211"/>
    </location>
</feature>
<feature type="domain" description="Carrier 1" evidence="2">
    <location>
        <begin position="594"/>
        <end position="671"/>
    </location>
</feature>
<feature type="domain" description="Carrier 2" evidence="2">
    <location>
        <begin position="1677"/>
        <end position="1756"/>
    </location>
</feature>
<feature type="region of interest" description="Adenylation 1" evidence="1 17">
    <location>
        <begin position="76"/>
        <end position="475"/>
    </location>
</feature>
<feature type="region of interest" description="Condensation 1" evidence="1 17">
    <location>
        <begin position="710"/>
        <end position="975"/>
    </location>
</feature>
<feature type="region of interest" description="Adenylation 2" evidence="1 17">
    <location>
        <begin position="1169"/>
        <end position="1563"/>
    </location>
</feature>
<feature type="region of interest" description="Condensation 2" evidence="1 17">
    <location>
        <begin position="1814"/>
        <end position="2069"/>
    </location>
</feature>
<feature type="modified residue" description="O-(pantetheine 4'-phosphoryl)serine" evidence="2">
    <location>
        <position position="631"/>
    </location>
</feature>
<feature type="modified residue" description="O-(pantetheine 4'-phosphoryl)serine" evidence="2">
    <location>
        <position position="1714"/>
    </location>
</feature>
<reference key="1">
    <citation type="journal article" date="2005" name="Nature">
        <title>Genomic sequence of the pathogenic and allergenic filamentous fungus Aspergillus fumigatus.</title>
        <authorList>
            <person name="Nierman W.C."/>
            <person name="Pain A."/>
            <person name="Anderson M.J."/>
            <person name="Wortman J.R."/>
            <person name="Kim H.S."/>
            <person name="Arroyo J."/>
            <person name="Berriman M."/>
            <person name="Abe K."/>
            <person name="Archer D.B."/>
            <person name="Bermejo C."/>
            <person name="Bennett J.W."/>
            <person name="Bowyer P."/>
            <person name="Chen D."/>
            <person name="Collins M."/>
            <person name="Coulsen R."/>
            <person name="Davies R."/>
            <person name="Dyer P.S."/>
            <person name="Farman M.L."/>
            <person name="Fedorova N."/>
            <person name="Fedorova N.D."/>
            <person name="Feldblyum T.V."/>
            <person name="Fischer R."/>
            <person name="Fosker N."/>
            <person name="Fraser A."/>
            <person name="Garcia J.L."/>
            <person name="Garcia M.J."/>
            <person name="Goble A."/>
            <person name="Goldman G.H."/>
            <person name="Gomi K."/>
            <person name="Griffith-Jones S."/>
            <person name="Gwilliam R."/>
            <person name="Haas B.J."/>
            <person name="Haas H."/>
            <person name="Harris D.E."/>
            <person name="Horiuchi H."/>
            <person name="Huang J."/>
            <person name="Humphray S."/>
            <person name="Jimenez J."/>
            <person name="Keller N."/>
            <person name="Khouri H."/>
            <person name="Kitamoto K."/>
            <person name="Kobayashi T."/>
            <person name="Konzack S."/>
            <person name="Kulkarni R."/>
            <person name="Kumagai T."/>
            <person name="Lafton A."/>
            <person name="Latge J.-P."/>
            <person name="Li W."/>
            <person name="Lord A."/>
            <person name="Lu C."/>
            <person name="Majoros W.H."/>
            <person name="May G.S."/>
            <person name="Miller B.L."/>
            <person name="Mohamoud Y."/>
            <person name="Molina M."/>
            <person name="Monod M."/>
            <person name="Mouyna I."/>
            <person name="Mulligan S."/>
            <person name="Murphy L.D."/>
            <person name="O'Neil S."/>
            <person name="Paulsen I."/>
            <person name="Penalva M.A."/>
            <person name="Pertea M."/>
            <person name="Price C."/>
            <person name="Pritchard B.L."/>
            <person name="Quail M.A."/>
            <person name="Rabbinowitsch E."/>
            <person name="Rawlins N."/>
            <person name="Rajandream M.A."/>
            <person name="Reichard U."/>
            <person name="Renauld H."/>
            <person name="Robson G.D."/>
            <person name="Rodriguez de Cordoba S."/>
            <person name="Rodriguez-Pena J.M."/>
            <person name="Ronning C.M."/>
            <person name="Rutter S."/>
            <person name="Salzberg S.L."/>
            <person name="Sanchez M."/>
            <person name="Sanchez-Ferrero J.C."/>
            <person name="Saunders D."/>
            <person name="Seeger K."/>
            <person name="Squares R."/>
            <person name="Squares S."/>
            <person name="Takeuchi M."/>
            <person name="Tekaia F."/>
            <person name="Turner G."/>
            <person name="Vazquez de Aldana C.R."/>
            <person name="Weidman J."/>
            <person name="White O."/>
            <person name="Woodward J.R."/>
            <person name="Yu J.-H."/>
            <person name="Fraser C.M."/>
            <person name="Galagan J.E."/>
            <person name="Asai K."/>
            <person name="Machida M."/>
            <person name="Hall N."/>
            <person name="Barrell B.G."/>
            <person name="Denning D.W."/>
        </authorList>
    </citation>
    <scope>NUCLEOTIDE SEQUENCE [LARGE SCALE GENOMIC DNA]</scope>
    <source>
        <strain>ATCC MYA-4609 / CBS 101355 / FGSC A1100 / Af293</strain>
    </source>
</reference>
<reference key="2">
    <citation type="journal article" date="2005" name="Microbiology">
        <title>Overproduction, purification and characterization of FtmPT1, a brevianamide F prenyltransferase from Aspergillus fumigatus.</title>
        <authorList>
            <person name="Grundmann A."/>
            <person name="Li S.M."/>
        </authorList>
    </citation>
    <scope>FUNCTION</scope>
</reference>
<reference key="3">
    <citation type="journal article" date="2005" name="Mol. Biol. Cell">
        <title>The Aspergillus fumigatus StuA protein governs the up-regulation of a discrete transcriptional program during the acquisition of developmental competence.</title>
        <authorList>
            <person name="Sheppard D.C."/>
            <person name="Doedt T."/>
            <person name="Chiang L.Y."/>
            <person name="Kim H.S."/>
            <person name="Chen D."/>
            <person name="Nierman W.C."/>
            <person name="Filler S.G."/>
        </authorList>
    </citation>
    <scope>INDUCTION</scope>
</reference>
<reference key="4">
    <citation type="journal article" date="2006" name="ChemBioChem">
        <title>The fumitremorgin gene cluster of Aspergillus fumigatus: identification of a gene encoding brevianamide F synthetase.</title>
        <authorList>
            <person name="Maiya S."/>
            <person name="Grundmann A."/>
            <person name="Li S.M."/>
            <person name="Turner G."/>
        </authorList>
    </citation>
    <scope>FUNCTION</scope>
    <scope>CATALYTIC ACTIVITY</scope>
    <scope>PATHWAY</scope>
</reference>
<reference key="5">
    <citation type="journal article" date="2006" name="Gene">
        <title>Phylogenomic analysis of non-ribosomal peptide synthetases in the genus Aspergillus.</title>
        <authorList>
            <person name="Cramer R.A. Jr."/>
            <person name="Stajich J.E."/>
            <person name="Yamanaka Y."/>
            <person name="Dietrich F.S."/>
            <person name="Steinbach W.J."/>
            <person name="Perfect J.R."/>
        </authorList>
    </citation>
    <scope>NOMENCLATURE</scope>
</reference>
<reference key="6">
    <citation type="journal article" date="2007" name="Microbiology">
        <title>Nonribosomal peptide synthesis in Aspergillus fumigatus and other fungi.</title>
        <authorList>
            <person name="Stack D."/>
            <person name="Neville C."/>
            <person name="Doyle S."/>
        </authorList>
    </citation>
    <scope>REVIEW ON FUNCTION</scope>
    <scope>DOMAIN</scope>
</reference>
<reference key="7">
    <citation type="journal article" date="2008" name="ChemBioChem">
        <title>FtmPT2, an N-prenyltransferase from Aspergillus fumigatus, catalyses the last step in the biosynthesis of fumitremorgin B.</title>
        <authorList>
            <person name="Grundmann A."/>
            <person name="Kuznetsova T."/>
            <person name="Afiyatullov S.S."/>
            <person name="Li S.M."/>
        </authorList>
    </citation>
    <scope>FUNCTION</scope>
</reference>
<reference key="8">
    <citation type="journal article" date="2009" name="ChemBioChem">
        <title>Identification of cytochrome P450s required for fumitremorgin biosynthesis in Aspergillus fumigatus.</title>
        <authorList>
            <person name="Kato N."/>
            <person name="Suzuki H."/>
            <person name="Takagi H."/>
            <person name="Asami Y."/>
            <person name="Kakeya H."/>
            <person name="Uramoto M."/>
            <person name="Usui T."/>
            <person name="Takahashi S."/>
            <person name="Sugimoto Y."/>
            <person name="Osada H."/>
        </authorList>
    </citation>
    <scope>FUNCTION</scope>
</reference>
<reference key="9">
    <citation type="journal article" date="2009" name="Org. Biomol. Chem.">
        <title>FtmOx1, a non-heme Fe(II) and alpha-ketoglutarate-dependent dioxygenase, catalyses the endoperoxide formation of verruculogen in Aspergillus fumigatus.</title>
        <authorList>
            <person name="Steffan N."/>
            <person name="Grundmann A."/>
            <person name="Afiyatullov S."/>
            <person name="Ruan H."/>
            <person name="Li S.M."/>
        </authorList>
    </citation>
    <scope>FUNCTION</scope>
</reference>
<reference key="10">
    <citation type="journal article" date="2010" name="J. Am. Chem. Soc.">
        <title>Structure-function analysis of an enzymatic prenyl transfer reaction identifies a reaction chamber with modifiable specificity.</title>
        <authorList>
            <person name="Jost M."/>
            <person name="Zocher G."/>
            <person name="Tarcz S."/>
            <person name="Matuschek M."/>
            <person name="Xie X."/>
            <person name="Li S.M."/>
            <person name="Stehle T."/>
        </authorList>
    </citation>
    <scope>FUNCTION</scope>
</reference>
<reference key="11">
    <citation type="journal article" date="2012" name="Org. Biomol. Chem.">
        <title>Breaking the regioselectivity of indole prenyltransferases: identification of regular C3-prenylated hexahydropyrrolo[2,3-b]indoles as side products of the regular C2-prenyltransferase FtmPT1.</title>
        <authorList>
            <person name="Wollinsky B."/>
            <person name="Ludwig L."/>
            <person name="Xie X."/>
            <person name="Li S.M."/>
        </authorList>
    </citation>
    <scope>FUNCTION</scope>
</reference>
<reference key="12">
    <citation type="journal article" date="2013" name="Biosci. Biotechnol. Biochem.">
        <title>A point mutation in ftmD blocks the fumitremorgin biosynthetic pathway in Aspergillus fumigatus strain Af293.</title>
        <authorList>
            <person name="Kato N."/>
            <person name="Suzuki H."/>
            <person name="Okumura H."/>
            <person name="Takahashi S."/>
            <person name="Osada H."/>
        </authorList>
    </citation>
    <scope>FUNCTION</scope>
    <scope>PATHWAY</scope>
</reference>
<keyword id="KW-0413">Isomerase</keyword>
<keyword id="KW-0436">Ligase</keyword>
<keyword id="KW-0596">Phosphopantetheine</keyword>
<keyword id="KW-0597">Phosphoprotein</keyword>
<keyword id="KW-1185">Reference proteome</keyword>
<keyword id="KW-0677">Repeat</keyword>
<keyword id="KW-0843">Virulence</keyword>
<protein>
    <recommendedName>
        <fullName evidence="14">Nonribosomal peptide synthetase 13</fullName>
        <ecNumber evidence="5">6.3.3.-</ecNumber>
    </recommendedName>
    <alternativeName>
        <fullName evidence="13">Brevianamide F synthase</fullName>
    </alternativeName>
    <alternativeName>
        <fullName evidence="13">Fumitremorgin biosynthesis protein A</fullName>
    </alternativeName>
</protein>
<gene>
    <name evidence="14" type="primary">NRPS13</name>
    <name evidence="13" type="synonym">ftmA</name>
    <name type="synonym">pesN</name>
    <name type="ORF">AFUA_8G00170</name>
</gene>
<name>FTMA_ASPFU</name>
<accession>Q4WAW3</accession>
<proteinExistence type="evidence at protein level"/>